<sequence>MAKASVELTRELQDSIRRCLSQGAVLQQHRVKLETKPKKFEDRVLALTSWRLHLFPLKVPAKVESSFNVLEIRAFNTLSQNQILVETERGVVSMRLPSAESVDQVTRHVSSALSKVCPGPGCLIRRGNADTPEGPRDTSPNSETSTSTTHSVCGGFSETYAALCDYNGLHCREEVQWDVDTIYHAEDNREFNLLDFSHLESRDLALMVAALAYNQWFTKLYCKDLRLGSEVLEQVLHTLSKSGSLEELVLDNAGLKTDFVQKLAGVFGENGSCVLHALTLSHNPIEDKGFLSLSQQLLCFPAGLTKLCLAKTAVSPRGLQALGQTFGANPAFASSLRYLDLSKNPGLLATDEANALYSFLAQPNALVHLDLSGTDCAVDLLLGALLHGCCSHLTYLNLARNSCSHRKGREAPPAFKQFFSSAYTLSHVNLSATRLPLEALRALLQGLSLNSHLSDLHLDLSSCELRSAGAQALQEQLGAVTCIGSLDLSDNGFDSDLLTLVPALGKNKSLKHLFLGKNFNVKAKTLEEILHKLVQLIQEEDCSLQSLSVADSRLKLRTSILINALGSNTCLAKVDLSGNGMEDIGAKMLSKALQINSSLRTILWDRNNTSALGFLDIARALESNHTLRFMSFPVSDISQAYRSAPERTEDVWQKIQWCLVRNNHSQTCPQEQAFRLQQGLVTSSAEQMLQRLCGRVQEEVRALRLCPLEPVQDELLYARDLIKDAKNSRALFPSLCELGHVLANDGPVRQRLESVASEVSKAVDKELQVILESMVSLTQELCPVAMRVAEGHNKMLSNVAERVTVPRNFIRGALLEQAGQDIQNKLDEVKLSVVTYLTNSIVDEILQELYHSHKSLARHLTQLRTLSDPPGGAGPGQDPSSRGRGRSHDHEETDDELGTNIDTMAIKKQKRCRKIRPVSAFISGSPQDMESQLGSLGIPPGWFSGLGSSQPTASGSWEGLSELPTHGYKLRHQTQGRPRPPRTTPPGPGRPSVPVPGPRQENGMATRLDEGLEDFFSRRVMDESSSYPRTLRTMRPGPSEPPLPALQKRRRRGLFHFRRPRSFKGDRGPGSPTAGLLLPPPPPPPPTQESPPSPDPPSLGNNSSPCWSPEEESSLLPGFGGARGSSFCRKMGTERLEAGDGAPAPGTAQPPRVHGVALPGLGRTKGWSFDGKREGTDPDQEDSTQAWQKRRSSDDAGPGAWKPPPPPQSSKPSFSAMRRAEATWHIAEESAPNHSCQSPSPASQDGEEEKDGALFPERMVPARNAKEPPIGPRPPKPVAVPRGRRAPQVPGGREEAESSSAAPGANKPWLRLGSQQDQEEPEGQVPSDLGRRTAPLKPKRTRRAQSCDKLEPDRRRPPDPAGVCAGTSEPGTD</sequence>
<keyword id="KW-1003">Cell membrane</keyword>
<keyword id="KW-0963">Cytoplasm</keyword>
<keyword id="KW-0433">Leucine-rich repeat</keyword>
<keyword id="KW-0472">Membrane</keyword>
<keyword id="KW-1185">Reference proteome</keyword>
<keyword id="KW-0677">Repeat</keyword>
<gene>
    <name type="primary">Carmil3</name>
    <name evidence="5" type="synonym">Lrrc16b</name>
</gene>
<organism>
    <name type="scientific">Rattus norvegicus</name>
    <name type="common">Rat</name>
    <dbReference type="NCBI Taxonomy" id="10116"/>
    <lineage>
        <taxon>Eukaryota</taxon>
        <taxon>Metazoa</taxon>
        <taxon>Chordata</taxon>
        <taxon>Craniata</taxon>
        <taxon>Vertebrata</taxon>
        <taxon>Euteleostomi</taxon>
        <taxon>Mammalia</taxon>
        <taxon>Eutheria</taxon>
        <taxon>Euarchontoglires</taxon>
        <taxon>Glires</taxon>
        <taxon>Rodentia</taxon>
        <taxon>Myomorpha</taxon>
        <taxon>Muroidea</taxon>
        <taxon>Muridae</taxon>
        <taxon>Murinae</taxon>
        <taxon>Rattus</taxon>
    </lineage>
</organism>
<accession>Q5XHY1</accession>
<name>CARL3_RAT</name>
<comment type="subcellular location">
    <subcellularLocation>
        <location evidence="1">Cytoplasm</location>
    </subcellularLocation>
    <subcellularLocation>
        <location evidence="1">Cell membrane</location>
    </subcellularLocation>
</comment>
<comment type="tissue specificity">
    <text evidence="3">Widely expressed, with much higher levels in fetal tissues than in adult ones. Highly expressed in newborn brain.</text>
</comment>
<comment type="domain">
    <text evidence="1">The C-terminus is necessary for localization to the cell membrane.</text>
</comment>
<comment type="similarity">
    <text evidence="4">Belongs to the CARMIL family.</text>
</comment>
<proteinExistence type="evidence at transcript level"/>
<evidence type="ECO:0000250" key="1">
    <source>
        <dbReference type="UniProtKB" id="Q8ND23"/>
    </source>
</evidence>
<evidence type="ECO:0000256" key="2">
    <source>
        <dbReference type="SAM" id="MobiDB-lite"/>
    </source>
</evidence>
<evidence type="ECO:0000269" key="3">
    <source>
    </source>
</evidence>
<evidence type="ECO:0000305" key="4"/>
<evidence type="ECO:0000312" key="5">
    <source>
        <dbReference type="RGD" id="1359120"/>
    </source>
</evidence>
<reference key="1">
    <citation type="journal article" date="2004" name="Nature">
        <title>Genome sequence of the Brown Norway rat yields insights into mammalian evolution.</title>
        <authorList>
            <person name="Gibbs R.A."/>
            <person name="Weinstock G.M."/>
            <person name="Metzker M.L."/>
            <person name="Muzny D.M."/>
            <person name="Sodergren E.J."/>
            <person name="Scherer S."/>
            <person name="Scott G."/>
            <person name="Steffen D."/>
            <person name="Worley K.C."/>
            <person name="Burch P.E."/>
            <person name="Okwuonu G."/>
            <person name="Hines S."/>
            <person name="Lewis L."/>
            <person name="Deramo C."/>
            <person name="Delgado O."/>
            <person name="Dugan-Rocha S."/>
            <person name="Miner G."/>
            <person name="Morgan M."/>
            <person name="Hawes A."/>
            <person name="Gill R."/>
            <person name="Holt R.A."/>
            <person name="Adams M.D."/>
            <person name="Amanatides P.G."/>
            <person name="Baden-Tillson H."/>
            <person name="Barnstead M."/>
            <person name="Chin S."/>
            <person name="Evans C.A."/>
            <person name="Ferriera S."/>
            <person name="Fosler C."/>
            <person name="Glodek A."/>
            <person name="Gu Z."/>
            <person name="Jennings D."/>
            <person name="Kraft C.L."/>
            <person name="Nguyen T."/>
            <person name="Pfannkoch C.M."/>
            <person name="Sitter C."/>
            <person name="Sutton G.G."/>
            <person name="Venter J.C."/>
            <person name="Woodage T."/>
            <person name="Smith D."/>
            <person name="Lee H.-M."/>
            <person name="Gustafson E."/>
            <person name="Cahill P."/>
            <person name="Kana A."/>
            <person name="Doucette-Stamm L."/>
            <person name="Weinstock K."/>
            <person name="Fechtel K."/>
            <person name="Weiss R.B."/>
            <person name="Dunn D.M."/>
            <person name="Green E.D."/>
            <person name="Blakesley R.W."/>
            <person name="Bouffard G.G."/>
            <person name="De Jong P.J."/>
            <person name="Osoegawa K."/>
            <person name="Zhu B."/>
            <person name="Marra M."/>
            <person name="Schein J."/>
            <person name="Bosdet I."/>
            <person name="Fjell C."/>
            <person name="Jones S."/>
            <person name="Krzywinski M."/>
            <person name="Mathewson C."/>
            <person name="Siddiqui A."/>
            <person name="Wye N."/>
            <person name="McPherson J."/>
            <person name="Zhao S."/>
            <person name="Fraser C.M."/>
            <person name="Shetty J."/>
            <person name="Shatsman S."/>
            <person name="Geer K."/>
            <person name="Chen Y."/>
            <person name="Abramzon S."/>
            <person name="Nierman W.C."/>
            <person name="Havlak P.H."/>
            <person name="Chen R."/>
            <person name="Durbin K.J."/>
            <person name="Egan A."/>
            <person name="Ren Y."/>
            <person name="Song X.-Z."/>
            <person name="Li B."/>
            <person name="Liu Y."/>
            <person name="Qin X."/>
            <person name="Cawley S."/>
            <person name="Cooney A.J."/>
            <person name="D'Souza L.M."/>
            <person name="Martin K."/>
            <person name="Wu J.Q."/>
            <person name="Gonzalez-Garay M.L."/>
            <person name="Jackson A.R."/>
            <person name="Kalafus K.J."/>
            <person name="McLeod M.P."/>
            <person name="Milosavljevic A."/>
            <person name="Virk D."/>
            <person name="Volkov A."/>
            <person name="Wheeler D.A."/>
            <person name="Zhang Z."/>
            <person name="Bailey J.A."/>
            <person name="Eichler E.E."/>
            <person name="Tuzun E."/>
            <person name="Birney E."/>
            <person name="Mongin E."/>
            <person name="Ureta-Vidal A."/>
            <person name="Woodwark C."/>
            <person name="Zdobnov E."/>
            <person name="Bork P."/>
            <person name="Suyama M."/>
            <person name="Torrents D."/>
            <person name="Alexandersson M."/>
            <person name="Trask B.J."/>
            <person name="Young J.M."/>
            <person name="Huang H."/>
            <person name="Wang H."/>
            <person name="Xing H."/>
            <person name="Daniels S."/>
            <person name="Gietzen D."/>
            <person name="Schmidt J."/>
            <person name="Stevens K."/>
            <person name="Vitt U."/>
            <person name="Wingrove J."/>
            <person name="Camara F."/>
            <person name="Mar Alba M."/>
            <person name="Abril J.F."/>
            <person name="Guigo R."/>
            <person name="Smit A."/>
            <person name="Dubchak I."/>
            <person name="Rubin E.M."/>
            <person name="Couronne O."/>
            <person name="Poliakov A."/>
            <person name="Huebner N."/>
            <person name="Ganten D."/>
            <person name="Goesele C."/>
            <person name="Hummel O."/>
            <person name="Kreitler T."/>
            <person name="Lee Y.-A."/>
            <person name="Monti J."/>
            <person name="Schulz H."/>
            <person name="Zimdahl H."/>
            <person name="Himmelbauer H."/>
            <person name="Lehrach H."/>
            <person name="Jacob H.J."/>
            <person name="Bromberg S."/>
            <person name="Gullings-Handley J."/>
            <person name="Jensen-Seaman M.I."/>
            <person name="Kwitek A.E."/>
            <person name="Lazar J."/>
            <person name="Pasko D."/>
            <person name="Tonellato P.J."/>
            <person name="Twigger S."/>
            <person name="Ponting C.P."/>
            <person name="Duarte J.M."/>
            <person name="Rice S."/>
            <person name="Goodstadt L."/>
            <person name="Beatson S.A."/>
            <person name="Emes R.D."/>
            <person name="Winter E.E."/>
            <person name="Webber C."/>
            <person name="Brandt P."/>
            <person name="Nyakatura G."/>
            <person name="Adetobi M."/>
            <person name="Chiaromonte F."/>
            <person name="Elnitski L."/>
            <person name="Eswara P."/>
            <person name="Hardison R.C."/>
            <person name="Hou M."/>
            <person name="Kolbe D."/>
            <person name="Makova K."/>
            <person name="Miller W."/>
            <person name="Nekrutenko A."/>
            <person name="Riemer C."/>
            <person name="Schwartz S."/>
            <person name="Taylor J."/>
            <person name="Yang S."/>
            <person name="Zhang Y."/>
            <person name="Lindpaintner K."/>
            <person name="Andrews T.D."/>
            <person name="Caccamo M."/>
            <person name="Clamp M."/>
            <person name="Clarke L."/>
            <person name="Curwen V."/>
            <person name="Durbin R.M."/>
            <person name="Eyras E."/>
            <person name="Searle S.M."/>
            <person name="Cooper G.M."/>
            <person name="Batzoglou S."/>
            <person name="Brudno M."/>
            <person name="Sidow A."/>
            <person name="Stone E.A."/>
            <person name="Payseur B.A."/>
            <person name="Bourque G."/>
            <person name="Lopez-Otin C."/>
            <person name="Puente X.S."/>
            <person name="Chakrabarti K."/>
            <person name="Chatterji S."/>
            <person name="Dewey C."/>
            <person name="Pachter L."/>
            <person name="Bray N."/>
            <person name="Yap V.B."/>
            <person name="Caspi A."/>
            <person name="Tesler G."/>
            <person name="Pevzner P.A."/>
            <person name="Haussler D."/>
            <person name="Roskin K.M."/>
            <person name="Baertsch R."/>
            <person name="Clawson H."/>
            <person name="Furey T.S."/>
            <person name="Hinrichs A.S."/>
            <person name="Karolchik D."/>
            <person name="Kent W.J."/>
            <person name="Rosenbloom K.R."/>
            <person name="Trumbower H."/>
            <person name="Weirauch M."/>
            <person name="Cooper D.N."/>
            <person name="Stenson P.D."/>
            <person name="Ma B."/>
            <person name="Brent M."/>
            <person name="Arumugam M."/>
            <person name="Shteynberg D."/>
            <person name="Copley R.R."/>
            <person name="Taylor M.S."/>
            <person name="Riethman H."/>
            <person name="Mudunuri U."/>
            <person name="Peterson J."/>
            <person name="Guyer M."/>
            <person name="Felsenfeld A."/>
            <person name="Old S."/>
            <person name="Mockrin S."/>
            <person name="Collins F.S."/>
        </authorList>
    </citation>
    <scope>NUCLEOTIDE SEQUENCE [LARGE SCALE GENOMIC DNA]</scope>
    <source>
        <strain>Brown Norway</strain>
    </source>
</reference>
<reference key="2">
    <citation type="journal article" date="2004" name="Genome Res.">
        <title>The status, quality, and expansion of the NIH full-length cDNA project: the Mammalian Gene Collection (MGC).</title>
        <authorList>
            <consortium name="The MGC Project Team"/>
        </authorList>
    </citation>
    <scope>NUCLEOTIDE SEQUENCE [LARGE SCALE MRNA] OF 685-1373</scope>
    <source>
        <tissue>Testis</tissue>
    </source>
</reference>
<reference key="3">
    <citation type="journal article" date="2011" name="Oncogene">
        <title>Identifying LRRC16B as an oncofetal gene with transforming enhancing capability using a combined bioinformatics and experimental approach.</title>
        <authorList>
            <person name="Hsu C.C."/>
            <person name="Chiang C.W."/>
            <person name="Cheng H.C."/>
            <person name="Chang W.T."/>
            <person name="Chou C.Y."/>
            <person name="Tsai H.W."/>
            <person name="Lee C.T."/>
            <person name="Wu Z.H."/>
            <person name="Lee T.Y."/>
            <person name="Chao A."/>
            <person name="Chow N.H."/>
            <person name="Ho C.L."/>
        </authorList>
    </citation>
    <scope>TISSUE SPECIFICITY</scope>
</reference>
<feature type="chain" id="PRO_0000324610" description="Capping protein, Arp2/3 and myosin-I linker protein 3">
    <location>
        <begin position="1"/>
        <end position="1373"/>
    </location>
</feature>
<feature type="repeat" description="LRR 1">
    <location>
        <begin position="242"/>
        <end position="269"/>
    </location>
</feature>
<feature type="repeat" description="LRR 2">
    <location>
        <begin position="272"/>
        <end position="299"/>
    </location>
</feature>
<feature type="repeat" description="LRR 3">
    <location>
        <begin position="333"/>
        <end position="358"/>
    </location>
</feature>
<feature type="repeat" description="LRR 4">
    <location>
        <begin position="390"/>
        <end position="417"/>
    </location>
</feature>
<feature type="repeat" description="LRR 5">
    <location>
        <begin position="422"/>
        <end position="446"/>
    </location>
</feature>
<feature type="repeat" description="LRR 6">
    <location>
        <begin position="453"/>
        <end position="475"/>
    </location>
</feature>
<feature type="repeat" description="LRR 7">
    <location>
        <begin position="480"/>
        <end position="507"/>
    </location>
</feature>
<feature type="repeat" description="LRR 8">
    <location>
        <begin position="510"/>
        <end position="536"/>
    </location>
</feature>
<feature type="repeat" description="LRR 9">
    <location>
        <begin position="541"/>
        <end position="564"/>
    </location>
</feature>
<feature type="repeat" description="LRR 10">
    <location>
        <begin position="568"/>
        <end position="591"/>
    </location>
</feature>
<feature type="region of interest" description="Disordered" evidence="2">
    <location>
        <begin position="126"/>
        <end position="151"/>
    </location>
</feature>
<feature type="region of interest" description="Disordered" evidence="2">
    <location>
        <begin position="864"/>
        <end position="902"/>
    </location>
</feature>
<feature type="region of interest" description="Disordered" evidence="2">
    <location>
        <begin position="970"/>
        <end position="1373"/>
    </location>
</feature>
<feature type="compositionally biased region" description="Low complexity" evidence="2">
    <location>
        <begin position="138"/>
        <end position="151"/>
    </location>
</feature>
<feature type="compositionally biased region" description="Pro residues" evidence="2">
    <location>
        <begin position="981"/>
        <end position="997"/>
    </location>
</feature>
<feature type="compositionally biased region" description="Basic and acidic residues" evidence="2">
    <location>
        <begin position="1007"/>
        <end position="1022"/>
    </location>
</feature>
<feature type="compositionally biased region" description="Basic residues" evidence="2">
    <location>
        <begin position="1047"/>
        <end position="1062"/>
    </location>
</feature>
<feature type="compositionally biased region" description="Pro residues" evidence="2">
    <location>
        <begin position="1078"/>
        <end position="1097"/>
    </location>
</feature>
<feature type="compositionally biased region" description="Low complexity" evidence="2">
    <location>
        <begin position="1098"/>
        <end position="1108"/>
    </location>
</feature>
<feature type="compositionally biased region" description="Basic and acidic residues" evidence="2">
    <location>
        <begin position="1218"/>
        <end position="1228"/>
    </location>
</feature>
<feature type="compositionally biased region" description="Polar residues" evidence="2">
    <location>
        <begin position="1232"/>
        <end position="1243"/>
    </location>
</feature>
<feature type="compositionally biased region" description="Pro residues" evidence="2">
    <location>
        <begin position="1269"/>
        <end position="1278"/>
    </location>
</feature>
<feature type="compositionally biased region" description="Basic and acidic residues" evidence="2">
    <location>
        <begin position="1345"/>
        <end position="1358"/>
    </location>
</feature>
<protein>
    <recommendedName>
        <fullName evidence="1">Capping protein, Arp2/3 and myosin-I linker protein 3</fullName>
    </recommendedName>
    <alternativeName>
        <fullName>Capping protein regulator and myosin 1 linker protein 3</fullName>
    </alternativeName>
    <alternativeName>
        <fullName evidence="5">Leucine-rich repeat-containing protein 16B</fullName>
    </alternativeName>
</protein>
<dbReference type="EMBL" id="AABR03095815">
    <property type="status" value="NOT_ANNOTATED_CDS"/>
    <property type="molecule type" value="Genomic_DNA"/>
</dbReference>
<dbReference type="EMBL" id="BC083918">
    <property type="protein sequence ID" value="AAH83918.2"/>
    <property type="molecule type" value="mRNA"/>
</dbReference>
<dbReference type="RefSeq" id="XP_008768907.1">
    <property type="nucleotide sequence ID" value="XM_008770685.4"/>
</dbReference>
<dbReference type="SMR" id="Q5XHY1"/>
<dbReference type="FunCoup" id="Q5XHY1">
    <property type="interactions" value="1280"/>
</dbReference>
<dbReference type="STRING" id="10116.ENSRNOP00000036263"/>
<dbReference type="GlyGen" id="Q5XHY1">
    <property type="glycosylation" value="1 site"/>
</dbReference>
<dbReference type="PhosphoSitePlus" id="Q5XHY1"/>
<dbReference type="PaxDb" id="10116-ENSRNOP00000036263"/>
<dbReference type="GeneID" id="361041"/>
<dbReference type="UCSC" id="RGD:1359120">
    <property type="organism name" value="rat"/>
</dbReference>
<dbReference type="AGR" id="RGD:1359120"/>
<dbReference type="CTD" id="90668"/>
<dbReference type="RGD" id="1359120">
    <property type="gene designation" value="Carmil3"/>
</dbReference>
<dbReference type="eggNOG" id="KOG4242">
    <property type="taxonomic scope" value="Eukaryota"/>
</dbReference>
<dbReference type="HOGENOM" id="CLU_003119_3_2_1"/>
<dbReference type="InParanoid" id="Q5XHY1"/>
<dbReference type="OrthoDB" id="18598at2759"/>
<dbReference type="PhylomeDB" id="Q5XHY1"/>
<dbReference type="TreeFam" id="TF316381"/>
<dbReference type="PRO" id="PR:Q5XHY1"/>
<dbReference type="Proteomes" id="UP000002494">
    <property type="component" value="Unplaced"/>
</dbReference>
<dbReference type="GO" id="GO:0005737">
    <property type="term" value="C:cytoplasm"/>
    <property type="evidence" value="ECO:0000250"/>
    <property type="project" value="UniProtKB"/>
</dbReference>
<dbReference type="GO" id="GO:0098978">
    <property type="term" value="C:glutamatergic synapse"/>
    <property type="evidence" value="ECO:0000266"/>
    <property type="project" value="RGD"/>
</dbReference>
<dbReference type="GO" id="GO:0030027">
    <property type="term" value="C:lamellipodium"/>
    <property type="evidence" value="ECO:0000318"/>
    <property type="project" value="GO_Central"/>
</dbReference>
<dbReference type="GO" id="GO:0005886">
    <property type="term" value="C:plasma membrane"/>
    <property type="evidence" value="ECO:0000250"/>
    <property type="project" value="UniProtKB"/>
</dbReference>
<dbReference type="GO" id="GO:0098794">
    <property type="term" value="C:postsynapse"/>
    <property type="evidence" value="ECO:0000266"/>
    <property type="project" value="RGD"/>
</dbReference>
<dbReference type="GO" id="GO:0016477">
    <property type="term" value="P:cell migration"/>
    <property type="evidence" value="ECO:0000318"/>
    <property type="project" value="GO_Central"/>
</dbReference>
<dbReference type="GO" id="GO:0034315">
    <property type="term" value="P:regulation of Arp2/3 complex-mediated actin nucleation"/>
    <property type="evidence" value="ECO:0000318"/>
    <property type="project" value="GO_Central"/>
</dbReference>
<dbReference type="GO" id="GO:0150052">
    <property type="term" value="P:regulation of postsynapse assembly"/>
    <property type="evidence" value="ECO:0000266"/>
    <property type="project" value="RGD"/>
</dbReference>
<dbReference type="FunFam" id="2.30.29.30:FF:000266">
    <property type="entry name" value="Capping protein, Arp2/3 and myosin-I linker protein 3"/>
    <property type="match status" value="1"/>
</dbReference>
<dbReference type="FunFam" id="3.80.10.10:FF:000009">
    <property type="entry name" value="F-actin-uncapping protein LRRC16A isoform X1"/>
    <property type="match status" value="1"/>
</dbReference>
<dbReference type="Gene3D" id="2.30.29.30">
    <property type="entry name" value="Pleckstrin-homology domain (PH domain)/Phosphotyrosine-binding domain (PTB)"/>
    <property type="match status" value="1"/>
</dbReference>
<dbReference type="Gene3D" id="3.80.10.10">
    <property type="entry name" value="Ribonuclease Inhibitor"/>
    <property type="match status" value="1"/>
</dbReference>
<dbReference type="InterPro" id="IPR031943">
    <property type="entry name" value="CARMIL_C"/>
</dbReference>
<dbReference type="InterPro" id="IPR041245">
    <property type="entry name" value="CARMIL_PH"/>
</dbReference>
<dbReference type="InterPro" id="IPR001611">
    <property type="entry name" value="Leu-rich_rpt"/>
</dbReference>
<dbReference type="InterPro" id="IPR032675">
    <property type="entry name" value="LRR_dom_sf"/>
</dbReference>
<dbReference type="InterPro" id="IPR011993">
    <property type="entry name" value="PH-like_dom_sf"/>
</dbReference>
<dbReference type="InterPro" id="IPR051279">
    <property type="entry name" value="PP1-Reg/Actin-Interact_Protein"/>
</dbReference>
<dbReference type="PANTHER" id="PTHR24112:SF43">
    <property type="entry name" value="CAPPING PROTEIN, ARP2_3 AND MYOSIN-I LINKER PROTEIN 3"/>
    <property type="match status" value="1"/>
</dbReference>
<dbReference type="PANTHER" id="PTHR24112">
    <property type="entry name" value="LEUCINE-RICH REPEAT, ISOFORM F-RELATED"/>
    <property type="match status" value="1"/>
</dbReference>
<dbReference type="Pfam" id="PF17888">
    <property type="entry name" value="Carm_PH"/>
    <property type="match status" value="1"/>
</dbReference>
<dbReference type="Pfam" id="PF16000">
    <property type="entry name" value="CARMIL_C"/>
    <property type="match status" value="1"/>
</dbReference>
<dbReference type="Pfam" id="PF13516">
    <property type="entry name" value="LRR_6"/>
    <property type="match status" value="3"/>
</dbReference>
<dbReference type="SMART" id="SM00368">
    <property type="entry name" value="LRR_RI"/>
    <property type="match status" value="4"/>
</dbReference>
<dbReference type="SUPFAM" id="SSF52047">
    <property type="entry name" value="RNI-like"/>
    <property type="match status" value="2"/>
</dbReference>